<accession>C1ACL9</accession>
<reference key="1">
    <citation type="submission" date="2006-03" db="EMBL/GenBank/DDBJ databases">
        <title>Complete genome sequence of Gemmatimonas aurantiaca T-27 that represents a novel phylum Gemmatimonadetes.</title>
        <authorList>
            <person name="Takasaki K."/>
            <person name="Ichikawa N."/>
            <person name="Miura H."/>
            <person name="Matsushita S."/>
            <person name="Watanabe Y."/>
            <person name="Oguchi A."/>
            <person name="Ankai A."/>
            <person name="Yashiro I."/>
            <person name="Takahashi M."/>
            <person name="Terui Y."/>
            <person name="Fukui S."/>
            <person name="Yokoyama H."/>
            <person name="Tanikawa S."/>
            <person name="Hanada S."/>
            <person name="Kamagata Y."/>
            <person name="Fujita N."/>
        </authorList>
    </citation>
    <scope>NUCLEOTIDE SEQUENCE [LARGE SCALE GENOMIC DNA]</scope>
    <source>
        <strain>DSM 14586 / JCM 11422 / NBRC 100505 / T-27</strain>
    </source>
</reference>
<organism>
    <name type="scientific">Gemmatimonas aurantiaca (strain DSM 14586 / JCM 11422 / NBRC 100505 / T-27)</name>
    <dbReference type="NCBI Taxonomy" id="379066"/>
    <lineage>
        <taxon>Bacteria</taxon>
        <taxon>Pseudomonadati</taxon>
        <taxon>Gemmatimonadota</taxon>
        <taxon>Gemmatimonadia</taxon>
        <taxon>Gemmatimonadales</taxon>
        <taxon>Gemmatimonadaceae</taxon>
        <taxon>Gemmatimonas</taxon>
    </lineage>
</organism>
<name>GLGC_GEMAT</name>
<dbReference type="EC" id="2.7.7.27" evidence="1"/>
<dbReference type="EMBL" id="AP009153">
    <property type="protein sequence ID" value="BAH40246.1"/>
    <property type="molecule type" value="Genomic_DNA"/>
</dbReference>
<dbReference type="RefSeq" id="WP_015895015.1">
    <property type="nucleotide sequence ID" value="NC_012489.1"/>
</dbReference>
<dbReference type="SMR" id="C1ACL9"/>
<dbReference type="STRING" id="379066.GAU_3204"/>
<dbReference type="KEGG" id="gau:GAU_3204"/>
<dbReference type="eggNOG" id="COG0448">
    <property type="taxonomic scope" value="Bacteria"/>
</dbReference>
<dbReference type="HOGENOM" id="CLU_029499_14_1_0"/>
<dbReference type="OrthoDB" id="9801810at2"/>
<dbReference type="UniPathway" id="UPA00164"/>
<dbReference type="Proteomes" id="UP000002209">
    <property type="component" value="Chromosome"/>
</dbReference>
<dbReference type="GO" id="GO:0005524">
    <property type="term" value="F:ATP binding"/>
    <property type="evidence" value="ECO:0007669"/>
    <property type="project" value="UniProtKB-KW"/>
</dbReference>
<dbReference type="GO" id="GO:0008878">
    <property type="term" value="F:glucose-1-phosphate adenylyltransferase activity"/>
    <property type="evidence" value="ECO:0007669"/>
    <property type="project" value="UniProtKB-UniRule"/>
</dbReference>
<dbReference type="GO" id="GO:0005978">
    <property type="term" value="P:glycogen biosynthetic process"/>
    <property type="evidence" value="ECO:0007669"/>
    <property type="project" value="UniProtKB-UniRule"/>
</dbReference>
<dbReference type="CDD" id="cd02508">
    <property type="entry name" value="ADP_Glucose_PP"/>
    <property type="match status" value="1"/>
</dbReference>
<dbReference type="CDD" id="cd04651">
    <property type="entry name" value="LbH_G1P_AT_C"/>
    <property type="match status" value="1"/>
</dbReference>
<dbReference type="Gene3D" id="2.160.10.10">
    <property type="entry name" value="Hexapeptide repeat proteins"/>
    <property type="match status" value="1"/>
</dbReference>
<dbReference type="Gene3D" id="3.90.550.10">
    <property type="entry name" value="Spore Coat Polysaccharide Biosynthesis Protein SpsA, Chain A"/>
    <property type="match status" value="1"/>
</dbReference>
<dbReference type="HAMAP" id="MF_00624">
    <property type="entry name" value="GlgC"/>
    <property type="match status" value="1"/>
</dbReference>
<dbReference type="InterPro" id="IPR011831">
    <property type="entry name" value="ADP-Glc_PPase"/>
</dbReference>
<dbReference type="InterPro" id="IPR005836">
    <property type="entry name" value="ADP_Glu_pyroP_CS"/>
</dbReference>
<dbReference type="InterPro" id="IPR023049">
    <property type="entry name" value="GlgC_bac"/>
</dbReference>
<dbReference type="InterPro" id="IPR056818">
    <property type="entry name" value="GlmU/GlgC-like_hexapep"/>
</dbReference>
<dbReference type="InterPro" id="IPR005835">
    <property type="entry name" value="NTP_transferase_dom"/>
</dbReference>
<dbReference type="InterPro" id="IPR029044">
    <property type="entry name" value="Nucleotide-diphossugar_trans"/>
</dbReference>
<dbReference type="InterPro" id="IPR011004">
    <property type="entry name" value="Trimer_LpxA-like_sf"/>
</dbReference>
<dbReference type="NCBIfam" id="TIGR02091">
    <property type="entry name" value="glgC"/>
    <property type="match status" value="1"/>
</dbReference>
<dbReference type="NCBIfam" id="NF001947">
    <property type="entry name" value="PRK00725.1"/>
    <property type="match status" value="1"/>
</dbReference>
<dbReference type="NCBIfam" id="NF002023">
    <property type="entry name" value="PRK00844.1"/>
    <property type="match status" value="1"/>
</dbReference>
<dbReference type="PANTHER" id="PTHR43523:SF2">
    <property type="entry name" value="GLUCOSE-1-PHOSPHATE ADENYLYLTRANSFERASE"/>
    <property type="match status" value="1"/>
</dbReference>
<dbReference type="PANTHER" id="PTHR43523">
    <property type="entry name" value="GLUCOSE-1-PHOSPHATE ADENYLYLTRANSFERASE-RELATED"/>
    <property type="match status" value="1"/>
</dbReference>
<dbReference type="Pfam" id="PF24894">
    <property type="entry name" value="Hexapep_GlmU"/>
    <property type="match status" value="1"/>
</dbReference>
<dbReference type="Pfam" id="PF00483">
    <property type="entry name" value="NTP_transferase"/>
    <property type="match status" value="1"/>
</dbReference>
<dbReference type="SUPFAM" id="SSF53448">
    <property type="entry name" value="Nucleotide-diphospho-sugar transferases"/>
    <property type="match status" value="1"/>
</dbReference>
<dbReference type="SUPFAM" id="SSF51161">
    <property type="entry name" value="Trimeric LpxA-like enzymes"/>
    <property type="match status" value="1"/>
</dbReference>
<dbReference type="PROSITE" id="PS00808">
    <property type="entry name" value="ADP_GLC_PYROPHOSPH_1"/>
    <property type="match status" value="1"/>
</dbReference>
<dbReference type="PROSITE" id="PS00809">
    <property type="entry name" value="ADP_GLC_PYROPHOSPH_2"/>
    <property type="match status" value="1"/>
</dbReference>
<feature type="chain" id="PRO_1000212301" description="Glucose-1-phosphate adenylyltransferase">
    <location>
        <begin position="1"/>
        <end position="418"/>
    </location>
</feature>
<feature type="binding site" evidence="1">
    <location>
        <position position="107"/>
    </location>
    <ligand>
        <name>alpha-D-glucose 1-phosphate</name>
        <dbReference type="ChEBI" id="CHEBI:58601"/>
    </ligand>
</feature>
<feature type="binding site" evidence="1">
    <location>
        <position position="172"/>
    </location>
    <ligand>
        <name>alpha-D-glucose 1-phosphate</name>
        <dbReference type="ChEBI" id="CHEBI:58601"/>
    </ligand>
</feature>
<feature type="binding site" evidence="1">
    <location>
        <begin position="187"/>
        <end position="188"/>
    </location>
    <ligand>
        <name>alpha-D-glucose 1-phosphate</name>
        <dbReference type="ChEBI" id="CHEBI:58601"/>
    </ligand>
</feature>
<feature type="binding site" evidence="1">
    <location>
        <position position="205"/>
    </location>
    <ligand>
        <name>alpha-D-glucose 1-phosphate</name>
        <dbReference type="ChEBI" id="CHEBI:58601"/>
    </ligand>
</feature>
<protein>
    <recommendedName>
        <fullName evidence="1">Glucose-1-phosphate adenylyltransferase</fullName>
        <ecNumber evidence="1">2.7.7.27</ecNumber>
    </recommendedName>
    <alternativeName>
        <fullName evidence="1">ADP-glucose pyrophosphorylase</fullName>
        <shortName evidence="1">ADPGlc PPase</shortName>
    </alternativeName>
    <alternativeName>
        <fullName evidence="1">ADP-glucose synthase</fullName>
    </alternativeName>
</protein>
<comment type="function">
    <text evidence="1">Involved in the biosynthesis of ADP-glucose, a building block required for the elongation reactions to produce glycogen. Catalyzes the reaction between ATP and alpha-D-glucose 1-phosphate (G1P) to produce pyrophosphate and ADP-Glc.</text>
</comment>
<comment type="catalytic activity">
    <reaction evidence="1">
        <text>alpha-D-glucose 1-phosphate + ATP + H(+) = ADP-alpha-D-glucose + diphosphate</text>
        <dbReference type="Rhea" id="RHEA:12120"/>
        <dbReference type="ChEBI" id="CHEBI:15378"/>
        <dbReference type="ChEBI" id="CHEBI:30616"/>
        <dbReference type="ChEBI" id="CHEBI:33019"/>
        <dbReference type="ChEBI" id="CHEBI:57498"/>
        <dbReference type="ChEBI" id="CHEBI:58601"/>
        <dbReference type="EC" id="2.7.7.27"/>
    </reaction>
</comment>
<comment type="pathway">
    <text evidence="1">Glycan biosynthesis; glycogen biosynthesis.</text>
</comment>
<comment type="subunit">
    <text evidence="1">Homotetramer.</text>
</comment>
<comment type="similarity">
    <text evidence="1">Belongs to the bacterial/plant glucose-1-phosphate adenylyltransferase family.</text>
</comment>
<gene>
    <name evidence="1" type="primary">glgC</name>
    <name type="ordered locus">GAU_3204</name>
</gene>
<evidence type="ECO:0000255" key="1">
    <source>
        <dbReference type="HAMAP-Rule" id="MF_00624"/>
    </source>
</evidence>
<keyword id="KW-0067">ATP-binding</keyword>
<keyword id="KW-0119">Carbohydrate metabolism</keyword>
<keyword id="KW-0320">Glycogen biosynthesis</keyword>
<keyword id="KW-0321">Glycogen metabolism</keyword>
<keyword id="KW-0547">Nucleotide-binding</keyword>
<keyword id="KW-0548">Nucleotidyltransferase</keyword>
<keyword id="KW-1185">Reference proteome</keyword>
<keyword id="KW-0808">Transferase</keyword>
<proteinExistence type="inferred from homology"/>
<sequence length="418" mass="46580">MTPSNRGTLARTAMAYVLAGGRGSRLYELTDPRAKPAVYFGGKTRIIDFALSNAINSGIRRIGVATQYKAHSLIRHLQRGWNFMRPERNESFDILPASQRVSETQWYDGTADAVYQNGDIIADYAPEYMVILAGDHVYKMDYELMLQQHVNQNADVTVGVLEVPQREASGFGVMHVDANDRIITFLEKPDDPPGIPGAPHLSLASMGIYVFRTTYLFELLRADAADPHSSHDFGKDIIPTVVRHGKAIAHRFSTSCVRSQDESLAYWRDVGTIDAYWEANIDLTTVTPQLDLFDKDWPIWTYSELTAPAKFVHNEEGRRGHALNSLVSGGCIVSGSYLHKSLLFTGVRVHSYSHLEGAVVQPYVDIGRAARLRNVVVDRGVRIPAGLVVGEDPVLDARRFRRSARGTVLITQPMIDRL</sequence>